<evidence type="ECO:0000255" key="1">
    <source>
        <dbReference type="HAMAP-Rule" id="MF_00049"/>
    </source>
</evidence>
<gene>
    <name evidence="1" type="primary">leuS</name>
    <name type="ordered locus">SGR_4973</name>
</gene>
<protein>
    <recommendedName>
        <fullName evidence="1">Leucine--tRNA ligase</fullName>
        <ecNumber evidence="1">6.1.1.4</ecNumber>
    </recommendedName>
    <alternativeName>
        <fullName evidence="1">Leucyl-tRNA synthetase</fullName>
        <shortName evidence="1">LeuRS</shortName>
    </alternativeName>
</protein>
<organism>
    <name type="scientific">Streptomyces griseus subsp. griseus (strain JCM 4626 / CBS 651.72 / NBRC 13350 / KCC S-0626 / ISP 5235)</name>
    <dbReference type="NCBI Taxonomy" id="455632"/>
    <lineage>
        <taxon>Bacteria</taxon>
        <taxon>Bacillati</taxon>
        <taxon>Actinomycetota</taxon>
        <taxon>Actinomycetes</taxon>
        <taxon>Kitasatosporales</taxon>
        <taxon>Streptomycetaceae</taxon>
        <taxon>Streptomyces</taxon>
    </lineage>
</organism>
<feature type="chain" id="PRO_1000091366" description="Leucine--tRNA ligase">
    <location>
        <begin position="1"/>
        <end position="957"/>
    </location>
</feature>
<feature type="short sequence motif" description="'HIGH' region">
    <location>
        <begin position="66"/>
        <end position="77"/>
    </location>
</feature>
<feature type="short sequence motif" description="'KMSKS' region">
    <location>
        <begin position="728"/>
        <end position="732"/>
    </location>
</feature>
<feature type="binding site" evidence="1">
    <location>
        <position position="731"/>
    </location>
    <ligand>
        <name>ATP</name>
        <dbReference type="ChEBI" id="CHEBI:30616"/>
    </ligand>
</feature>
<reference key="1">
    <citation type="journal article" date="2008" name="J. Bacteriol.">
        <title>Genome sequence of the streptomycin-producing microorganism Streptomyces griseus IFO 13350.</title>
        <authorList>
            <person name="Ohnishi Y."/>
            <person name="Ishikawa J."/>
            <person name="Hara H."/>
            <person name="Suzuki H."/>
            <person name="Ikenoya M."/>
            <person name="Ikeda H."/>
            <person name="Yamashita A."/>
            <person name="Hattori M."/>
            <person name="Horinouchi S."/>
        </authorList>
    </citation>
    <scope>NUCLEOTIDE SEQUENCE [LARGE SCALE GENOMIC DNA]</scope>
    <source>
        <strain>JCM 4626 / CBS 651.72 / NBRC 13350 / KCC S-0626 / ISP 5235</strain>
    </source>
</reference>
<accession>B1VXF6</accession>
<dbReference type="EC" id="6.1.1.4" evidence="1"/>
<dbReference type="EMBL" id="AP009493">
    <property type="protein sequence ID" value="BAG21802.1"/>
    <property type="molecule type" value="Genomic_DNA"/>
</dbReference>
<dbReference type="RefSeq" id="WP_012381003.1">
    <property type="nucleotide sequence ID" value="NC_010572.1"/>
</dbReference>
<dbReference type="SMR" id="B1VXF6"/>
<dbReference type="KEGG" id="sgr:SGR_4973"/>
<dbReference type="PATRIC" id="fig|455632.4.peg.5086"/>
<dbReference type="eggNOG" id="COG0495">
    <property type="taxonomic scope" value="Bacteria"/>
</dbReference>
<dbReference type="HOGENOM" id="CLU_004427_0_0_11"/>
<dbReference type="Proteomes" id="UP000001685">
    <property type="component" value="Chromosome"/>
</dbReference>
<dbReference type="GO" id="GO:0005829">
    <property type="term" value="C:cytosol"/>
    <property type="evidence" value="ECO:0007669"/>
    <property type="project" value="TreeGrafter"/>
</dbReference>
<dbReference type="GO" id="GO:0002161">
    <property type="term" value="F:aminoacyl-tRNA deacylase activity"/>
    <property type="evidence" value="ECO:0007669"/>
    <property type="project" value="InterPro"/>
</dbReference>
<dbReference type="GO" id="GO:0005524">
    <property type="term" value="F:ATP binding"/>
    <property type="evidence" value="ECO:0007669"/>
    <property type="project" value="UniProtKB-UniRule"/>
</dbReference>
<dbReference type="GO" id="GO:0004823">
    <property type="term" value="F:leucine-tRNA ligase activity"/>
    <property type="evidence" value="ECO:0007669"/>
    <property type="project" value="UniProtKB-UniRule"/>
</dbReference>
<dbReference type="GO" id="GO:0006429">
    <property type="term" value="P:leucyl-tRNA aminoacylation"/>
    <property type="evidence" value="ECO:0007669"/>
    <property type="project" value="UniProtKB-UniRule"/>
</dbReference>
<dbReference type="CDD" id="cd07958">
    <property type="entry name" value="Anticodon_Ia_Leu_BEm"/>
    <property type="match status" value="1"/>
</dbReference>
<dbReference type="FunFam" id="3.40.50.620:FF:000056">
    <property type="entry name" value="Leucine--tRNA ligase"/>
    <property type="match status" value="1"/>
</dbReference>
<dbReference type="FunFam" id="3.40.50.620:FF:000060">
    <property type="entry name" value="Leucine--tRNA ligase"/>
    <property type="match status" value="1"/>
</dbReference>
<dbReference type="FunFam" id="3.40.50.620:FF:000087">
    <property type="entry name" value="Leucine--tRNA ligase"/>
    <property type="match status" value="1"/>
</dbReference>
<dbReference type="FunFam" id="3.90.740.10:FF:000017">
    <property type="entry name" value="Leucine--tRNA ligase"/>
    <property type="match status" value="1"/>
</dbReference>
<dbReference type="FunFam" id="1.10.730.10:FF:000011">
    <property type="entry name" value="Leucine--tRNA ligase chloroplastic/mitochondrial"/>
    <property type="match status" value="1"/>
</dbReference>
<dbReference type="Gene3D" id="3.40.50.620">
    <property type="entry name" value="HUPs"/>
    <property type="match status" value="3"/>
</dbReference>
<dbReference type="Gene3D" id="1.10.730.10">
    <property type="entry name" value="Isoleucyl-tRNA Synthetase, Domain 1"/>
    <property type="match status" value="1"/>
</dbReference>
<dbReference type="HAMAP" id="MF_00049_B">
    <property type="entry name" value="Leu_tRNA_synth_B"/>
    <property type="match status" value="1"/>
</dbReference>
<dbReference type="InterPro" id="IPR001412">
    <property type="entry name" value="aa-tRNA-synth_I_CS"/>
</dbReference>
<dbReference type="InterPro" id="IPR002302">
    <property type="entry name" value="Leu-tRNA-ligase"/>
</dbReference>
<dbReference type="InterPro" id="IPR025709">
    <property type="entry name" value="Leu_tRNA-synth_edit"/>
</dbReference>
<dbReference type="InterPro" id="IPR013155">
    <property type="entry name" value="M/V/L/I-tRNA-synth_anticd-bd"/>
</dbReference>
<dbReference type="InterPro" id="IPR015413">
    <property type="entry name" value="Methionyl/Leucyl_tRNA_Synth"/>
</dbReference>
<dbReference type="InterPro" id="IPR014729">
    <property type="entry name" value="Rossmann-like_a/b/a_fold"/>
</dbReference>
<dbReference type="InterPro" id="IPR009080">
    <property type="entry name" value="tRNAsynth_Ia_anticodon-bd"/>
</dbReference>
<dbReference type="InterPro" id="IPR009008">
    <property type="entry name" value="Val/Leu/Ile-tRNA-synth_edit"/>
</dbReference>
<dbReference type="NCBIfam" id="TIGR00396">
    <property type="entry name" value="leuS_bact"/>
    <property type="match status" value="1"/>
</dbReference>
<dbReference type="PANTHER" id="PTHR43740:SF2">
    <property type="entry name" value="LEUCINE--TRNA LIGASE, MITOCHONDRIAL"/>
    <property type="match status" value="1"/>
</dbReference>
<dbReference type="PANTHER" id="PTHR43740">
    <property type="entry name" value="LEUCYL-TRNA SYNTHETASE"/>
    <property type="match status" value="1"/>
</dbReference>
<dbReference type="Pfam" id="PF08264">
    <property type="entry name" value="Anticodon_1"/>
    <property type="match status" value="1"/>
</dbReference>
<dbReference type="Pfam" id="PF13603">
    <property type="entry name" value="tRNA-synt_1_2"/>
    <property type="match status" value="1"/>
</dbReference>
<dbReference type="Pfam" id="PF09334">
    <property type="entry name" value="tRNA-synt_1g"/>
    <property type="match status" value="1"/>
</dbReference>
<dbReference type="PRINTS" id="PR00985">
    <property type="entry name" value="TRNASYNTHLEU"/>
</dbReference>
<dbReference type="SUPFAM" id="SSF47323">
    <property type="entry name" value="Anticodon-binding domain of a subclass of class I aminoacyl-tRNA synthetases"/>
    <property type="match status" value="1"/>
</dbReference>
<dbReference type="SUPFAM" id="SSF52374">
    <property type="entry name" value="Nucleotidylyl transferase"/>
    <property type="match status" value="1"/>
</dbReference>
<dbReference type="SUPFAM" id="SSF50677">
    <property type="entry name" value="ValRS/IleRS/LeuRS editing domain"/>
    <property type="match status" value="1"/>
</dbReference>
<dbReference type="PROSITE" id="PS00178">
    <property type="entry name" value="AA_TRNA_LIGASE_I"/>
    <property type="match status" value="1"/>
</dbReference>
<comment type="catalytic activity">
    <reaction evidence="1">
        <text>tRNA(Leu) + L-leucine + ATP = L-leucyl-tRNA(Leu) + AMP + diphosphate</text>
        <dbReference type="Rhea" id="RHEA:11688"/>
        <dbReference type="Rhea" id="RHEA-COMP:9613"/>
        <dbReference type="Rhea" id="RHEA-COMP:9622"/>
        <dbReference type="ChEBI" id="CHEBI:30616"/>
        <dbReference type="ChEBI" id="CHEBI:33019"/>
        <dbReference type="ChEBI" id="CHEBI:57427"/>
        <dbReference type="ChEBI" id="CHEBI:78442"/>
        <dbReference type="ChEBI" id="CHEBI:78494"/>
        <dbReference type="ChEBI" id="CHEBI:456215"/>
        <dbReference type="EC" id="6.1.1.4"/>
    </reaction>
</comment>
<comment type="subcellular location">
    <subcellularLocation>
        <location evidence="1">Cytoplasm</location>
    </subcellularLocation>
</comment>
<comment type="similarity">
    <text evidence="1">Belongs to the class-I aminoacyl-tRNA synthetase family.</text>
</comment>
<keyword id="KW-0030">Aminoacyl-tRNA synthetase</keyword>
<keyword id="KW-0067">ATP-binding</keyword>
<keyword id="KW-0963">Cytoplasm</keyword>
<keyword id="KW-0436">Ligase</keyword>
<keyword id="KW-0547">Nucleotide-binding</keyword>
<keyword id="KW-0648">Protein biosynthesis</keyword>
<sequence>MSETNSAAETAAPHRYTAAMAADIEARWQDFWDAEGTYEAPNPTGDLAGDPELAARPKKFIMDMFPYPSGAGLHVGHPLGYIATDVYARHQRMTGHNVLHTLGFDAFGLPAEQYAVQTGTHPRVSTEANMENMKVQLRRLGLGHDNRRSFATIDSEYYKWTQWIFLQIFNSWYDSEADRARPIAELVEQFENGTRATPDGREWGALSAAERADLLSEYRLAYASDAPVNWSPGLGTVLANEEVTADGRSERGNFPVFKAKLRQWNMRITAYADRLLNDLDGLDWPEAIKLQQRNWIGRSEGARVEFPVDTAGGITVFTTRQDTLFGATYMVLAPEHDMVERIIPAAWPEGTHPVWTGGHASPAEAVTAYRKQAAAKSDVERQAEAKDKTGVFTGAYATNPVSGEKVPVFIADYVLMGYGTGAIMAVPAHDARDFAFARAFELPMRCVVQPSDDRGTDPATWDDAFSSYDAKLVNSANDEISLDGLGVVEAKARITEWLKEHGVGEGTVNFRLRDWLFSRQRYWGEPFPIVYDEDGIAHPLPESMLPLELPEVEDYSPRTFDPEDATAQPETPLSRNADWVNVTLDLGDGAGPRKYRRETNTMPNWAGSCWYELRYLDPNNDRQLVDPSIEQYWMGPREGQPTGGVDLYVGGAEHAVLHLLYARFWSKVLHDLGHISSAEPFHKLYNQGMIQAFVYRDSRGIAVPAAEVEERDGAFYHAGEKVSRVLGKMGKSLKNAVTPDEICAEYGADTLRLYEMAMGPLDVSRPWDTRAVVGQYRLLQRLWRNVVDEATGEVTVVDTEPDEDTLRALHKAIDGVGQDMAGMRFNTAIAKVTELNNHLTKAGGPLSRSVAERLVLLIAPLAPHIAEELWRRLGHADSVVHQDFPVADPAYVVDETVTCVVQIKGKVRARLEISPAITDEELEALALADEAVVAALGGAGIRKVIVRAPKLVNIVPA</sequence>
<proteinExistence type="inferred from homology"/>
<name>SYL_STRGG</name>